<evidence type="ECO:0000255" key="1"/>
<evidence type="ECO:0000305" key="2"/>
<sequence>MSDLLILTMNYLSHGLVIHMIINGIVLALIIPSMTNKITQMVVDNDHVRLIEPFVLLVLMELISGIQKIFFIQKYQLDLQRKIHTGIEDYICKKISALPWNLTRTVLSNADLGKSKNIIVYSTLSLIDILTYQSSHLFAFIGYTLWILYNSPITLTIYILLIPIIVFQIKYKNITNPSVYNKIWETYRNLASNQFMDIIHSRGPEIHDKMIKTINEYEETRSTNTLNDNKYVESINLAITLLTRFNLLIVLLIDPNISSFMIQLQFGTIIKNTSNLFCSAYRKYQDLRKEQLNIDNVLPTIESPIIKQINDFESICINKLVYEYSKTEFKLELKSPIELFRSQIVLLEGKSGSGKSSFMDIIAGVIPCNQYQFDIKIDDTVTNGGFQTLNKKRIYIEQFATSNWNIMAKDFITGHYRFSKIIMEHSLTMANCKDFVTIEEVSSTNCSKLSGGQKGRIEIARMIYAIIMDRPSILILDEIDKSLQTDLAVSIIESVIKICRSNRILCIMSAHNNEVKKLNFDMIIPMNNGIIG</sequence>
<feature type="chain" id="PRO_0000093474" description="Uncharacterized ABC transporter ATP-binding protein/permease L733">
    <location>
        <begin position="1"/>
        <end position="532"/>
    </location>
</feature>
<feature type="transmembrane region" description="Helical" evidence="1">
    <location>
        <begin position="11"/>
        <end position="31"/>
    </location>
</feature>
<feature type="transmembrane region" description="Helical" evidence="1">
    <location>
        <begin position="51"/>
        <end position="71"/>
    </location>
</feature>
<feature type="transmembrane region" description="Helical" evidence="1">
    <location>
        <begin position="126"/>
        <end position="146"/>
    </location>
</feature>
<feature type="transmembrane region" description="Helical" evidence="1">
    <location>
        <begin position="147"/>
        <end position="167"/>
    </location>
</feature>
<feature type="transmembrane region" description="Helical" evidence="1">
    <location>
        <begin position="231"/>
        <end position="253"/>
    </location>
</feature>
<feature type="domain" description="ABC transporter">
    <location>
        <begin position="315"/>
        <end position="531"/>
    </location>
</feature>
<feature type="binding site" evidence="1">
    <location>
        <begin position="349"/>
        <end position="356"/>
    </location>
    <ligand>
        <name>ATP</name>
        <dbReference type="ChEBI" id="CHEBI:30616"/>
    </ligand>
</feature>
<keyword id="KW-0067">ATP-binding</keyword>
<keyword id="KW-0472">Membrane</keyword>
<keyword id="KW-0547">Nucleotide-binding</keyword>
<keyword id="KW-1185">Reference proteome</keyword>
<keyword id="KW-0812">Transmembrane</keyword>
<keyword id="KW-1133">Transmembrane helix</keyword>
<keyword id="KW-0813">Transport</keyword>
<comment type="subcellular location">
    <subcellularLocation>
        <location evidence="2">Membrane</location>
        <topology evidence="2">Multi-pass membrane protein</topology>
    </subcellularLocation>
</comment>
<name>YL733_MIMIV</name>
<gene>
    <name type="ordered locus">MIMI_L733</name>
</gene>
<dbReference type="EMBL" id="AY653733">
    <property type="protein sequence ID" value="AAV50993.1"/>
    <property type="molecule type" value="Genomic_DNA"/>
</dbReference>
<dbReference type="KEGG" id="vg:9925388"/>
<dbReference type="OrthoDB" id="14486at10239"/>
<dbReference type="Proteomes" id="UP000001134">
    <property type="component" value="Genome"/>
</dbReference>
<dbReference type="GO" id="GO:0016020">
    <property type="term" value="C:membrane"/>
    <property type="evidence" value="ECO:0007669"/>
    <property type="project" value="UniProtKB-SubCell"/>
</dbReference>
<dbReference type="GO" id="GO:0005524">
    <property type="term" value="F:ATP binding"/>
    <property type="evidence" value="ECO:0007669"/>
    <property type="project" value="UniProtKB-KW"/>
</dbReference>
<dbReference type="GO" id="GO:0016887">
    <property type="term" value="F:ATP hydrolysis activity"/>
    <property type="evidence" value="ECO:0007669"/>
    <property type="project" value="InterPro"/>
</dbReference>
<dbReference type="Gene3D" id="3.40.50.300">
    <property type="entry name" value="P-loop containing nucleotide triphosphate hydrolases"/>
    <property type="match status" value="1"/>
</dbReference>
<dbReference type="InterPro" id="IPR003593">
    <property type="entry name" value="AAA+_ATPase"/>
</dbReference>
<dbReference type="InterPro" id="IPR003439">
    <property type="entry name" value="ABC_transporter-like_ATP-bd"/>
</dbReference>
<dbReference type="InterPro" id="IPR050153">
    <property type="entry name" value="Metal_Ion_Import_ABC"/>
</dbReference>
<dbReference type="InterPro" id="IPR027417">
    <property type="entry name" value="P-loop_NTPase"/>
</dbReference>
<dbReference type="PANTHER" id="PTHR42734">
    <property type="entry name" value="METAL TRANSPORT SYSTEM ATP-BINDING PROTEIN TM_0124-RELATED"/>
    <property type="match status" value="1"/>
</dbReference>
<dbReference type="Pfam" id="PF00005">
    <property type="entry name" value="ABC_tran"/>
    <property type="match status" value="1"/>
</dbReference>
<dbReference type="SMART" id="SM00382">
    <property type="entry name" value="AAA"/>
    <property type="match status" value="1"/>
</dbReference>
<dbReference type="SUPFAM" id="SSF52540">
    <property type="entry name" value="P-loop containing nucleoside triphosphate hydrolases"/>
    <property type="match status" value="1"/>
</dbReference>
<accession>Q5UNZ1</accession>
<proteinExistence type="predicted"/>
<organism>
    <name type="scientific">Acanthamoeba polyphaga mimivirus</name>
    <name type="common">APMV</name>
    <dbReference type="NCBI Taxonomy" id="212035"/>
    <lineage>
        <taxon>Viruses</taxon>
        <taxon>Varidnaviria</taxon>
        <taxon>Bamfordvirae</taxon>
        <taxon>Nucleocytoviricota</taxon>
        <taxon>Megaviricetes</taxon>
        <taxon>Imitervirales</taxon>
        <taxon>Mimiviridae</taxon>
        <taxon>Megamimivirinae</taxon>
        <taxon>Mimivirus</taxon>
        <taxon>Mimivirus bradfordmassiliense</taxon>
    </lineage>
</organism>
<organismHost>
    <name type="scientific">Acanthamoeba polyphaga</name>
    <name type="common">Amoeba</name>
    <dbReference type="NCBI Taxonomy" id="5757"/>
</organismHost>
<protein>
    <recommendedName>
        <fullName>Uncharacterized ABC transporter ATP-binding protein/permease L733</fullName>
    </recommendedName>
</protein>
<reference key="1">
    <citation type="journal article" date="2004" name="Science">
        <title>The 1.2-megabase genome sequence of Mimivirus.</title>
        <authorList>
            <person name="Raoult D."/>
            <person name="Audic S."/>
            <person name="Robert C."/>
            <person name="Abergel C."/>
            <person name="Renesto P."/>
            <person name="Ogata H."/>
            <person name="La Scola B."/>
            <person name="Susan M."/>
            <person name="Claverie J.-M."/>
        </authorList>
    </citation>
    <scope>NUCLEOTIDE SEQUENCE [LARGE SCALE GENOMIC DNA]</scope>
    <source>
        <strain>Rowbotham-Bradford</strain>
    </source>
</reference>